<feature type="chain" id="PRO_0000216865" description="Uncharacterized protein pXO2-81/BXB0111/GBAA_pXO2_0111">
    <location>
        <begin position="1"/>
        <end position="589"/>
    </location>
</feature>
<keyword id="KW-0614">Plasmid</keyword>
<keyword id="KW-1185">Reference proteome</keyword>
<dbReference type="EMBL" id="AF188935">
    <property type="protein sequence ID" value="AAF13685.1"/>
    <property type="molecule type" value="Genomic_DNA"/>
</dbReference>
<dbReference type="EMBL" id="AE011191">
    <property type="protein sequence ID" value="AAM26261.1"/>
    <property type="molecule type" value="Genomic_DNA"/>
</dbReference>
<dbReference type="EMBL" id="AE017335">
    <property type="protein sequence ID" value="AAT35523.1"/>
    <property type="molecule type" value="Genomic_DNA"/>
</dbReference>
<dbReference type="RefSeq" id="NP_053235.1">
    <property type="nucleotide sequence ID" value="NC_002146.1"/>
</dbReference>
<dbReference type="RefSeq" id="WP_000222646.1">
    <property type="nucleotide sequence ID" value="NZ_VTZL01000009.1"/>
</dbReference>
<dbReference type="GeneID" id="45025396"/>
<dbReference type="KEGG" id="bar:GBAA_pXO2_0111"/>
<dbReference type="HOGENOM" id="CLU_012069_5_0_9"/>
<dbReference type="Proteomes" id="UP000000594">
    <property type="component" value="Plasmid pXO2"/>
</dbReference>
<dbReference type="GO" id="GO:0003697">
    <property type="term" value="F:single-stranded DNA binding"/>
    <property type="evidence" value="ECO:0007669"/>
    <property type="project" value="InterPro"/>
</dbReference>
<dbReference type="InterPro" id="IPR013610">
    <property type="entry name" value="ArdC_N"/>
</dbReference>
<dbReference type="InterPro" id="IPR041045">
    <property type="entry name" value="LPD25"/>
</dbReference>
<dbReference type="Pfam" id="PF08401">
    <property type="entry name" value="ArdcN"/>
    <property type="match status" value="1"/>
</dbReference>
<dbReference type="Pfam" id="PF18840">
    <property type="entry name" value="LPD25"/>
    <property type="match status" value="1"/>
</dbReference>
<accession>Q9RMV4</accession>
<accession>Q7CM74</accession>
<name>Y6611_BACAN</name>
<proteinExistence type="predicted"/>
<geneLocation type="plasmid">
    <name>pXO2</name>
</geneLocation>
<organism>
    <name type="scientific">Bacillus anthracis</name>
    <dbReference type="NCBI Taxonomy" id="1392"/>
    <lineage>
        <taxon>Bacteria</taxon>
        <taxon>Bacillati</taxon>
        <taxon>Bacillota</taxon>
        <taxon>Bacilli</taxon>
        <taxon>Bacillales</taxon>
        <taxon>Bacillaceae</taxon>
        <taxon>Bacillus</taxon>
        <taxon>Bacillus cereus group</taxon>
    </lineage>
</organism>
<sequence length="589" mass="68312">MTYTKKKYTPKTKEQIKEETKEIMDKVLTDITKYYNSPEDMLELANFMAQFSNYSPRNMQLIKSQFPHAYACASFKTFKDAGFHVNKGEKAMKVFHPYVKEFVRDPKTKLPIPLTKLTAEQKQQVKNGELKVEKQTNYYLKATAFDISQTNASPEDLPKIFPNRQFNFEVTEENKELLKLGIQALAEKENIKIKDMGQGALIKELGTIHGAYVEVADSSFAQIVMNTRNTETKELSVAIHELAHAKLHNKKVASLEHVPTEEFEAELTSYIVCKHYGMDTSEASVPYIAEWTKNGQDIEEKDKSIMRVHETASSFINTIDKKISELQREREKNREQNKKEIEDVYVVRYGALTSTEEKIITVRELRERADRDKSYSDVENANTLNDKEYIEAFNKANEENCIALEHNEIKKLMVVIQWSEADLEKNKAIPFGEANAIMSKRIAEIDAESKRAEEKGEYVPYEKTRYHLILPKEMDKDFNRMEVVTMDRLDLGDGIYKSPYEQILNEKRQLSDEVKQALQQEINEYEQTKGQSNPEKLRAVNTTEISEIQQGKVDRFLSNKTEKDEDAAAIKQQEARRMARMAYMQRMER</sequence>
<reference key="1">
    <citation type="journal article" date="1999" name="J. Appl. Microbiol.">
        <title>Sequence, assembly and analysis of pXO1 and pXO2.</title>
        <authorList>
            <person name="Okinaka R.T."/>
            <person name="Cloud K."/>
            <person name="Hampton O."/>
            <person name="Hoffmaster A."/>
            <person name="Hill K.K."/>
            <person name="Keim P."/>
            <person name="Koehler T."/>
            <person name="Lamke G."/>
            <person name="Kumano S."/>
            <person name="Manter D."/>
            <person name="Martinez Y."/>
            <person name="Ricke D."/>
            <person name="Svensson R."/>
            <person name="Jackson P.J."/>
        </authorList>
    </citation>
    <scope>NUCLEOTIDE SEQUENCE [GENOMIC DNA]</scope>
    <source>
        <strain>Pasteur</strain>
    </source>
</reference>
<reference key="2">
    <citation type="journal article" date="2002" name="Science">
        <title>Comparative genome sequencing for discovery of novel polymorphisms in Bacillus anthracis.</title>
        <authorList>
            <person name="Read T.D."/>
            <person name="Salzberg S.L."/>
            <person name="Pop M."/>
            <person name="Shumway M.F."/>
            <person name="Umayam L."/>
            <person name="Jiang L."/>
            <person name="Holtzapple E."/>
            <person name="Busch J.D."/>
            <person name="Smith K.L."/>
            <person name="Schupp J.M."/>
            <person name="Solomon D."/>
            <person name="Keim P."/>
            <person name="Fraser C.M."/>
        </authorList>
    </citation>
    <scope>NUCLEOTIDE SEQUENCE [GENOMIC DNA]</scope>
    <source>
        <strain>Ames / isolate Florida / A2012</strain>
    </source>
</reference>
<reference key="3">
    <citation type="journal article" date="2009" name="J. Bacteriol.">
        <title>The complete genome sequence of Bacillus anthracis Ames 'Ancestor'.</title>
        <authorList>
            <person name="Ravel J."/>
            <person name="Jiang L."/>
            <person name="Stanley S.T."/>
            <person name="Wilson M.R."/>
            <person name="Decker R.S."/>
            <person name="Read T.D."/>
            <person name="Worsham P."/>
            <person name="Keim P.S."/>
            <person name="Salzberg S.L."/>
            <person name="Fraser-Liggett C.M."/>
            <person name="Rasko D.A."/>
        </authorList>
    </citation>
    <scope>NUCLEOTIDE SEQUENCE [LARGE SCALE GENOMIC DNA]</scope>
    <source>
        <strain>Ames ancestor</strain>
    </source>
</reference>
<protein>
    <recommendedName>
        <fullName>Uncharacterized protein pXO2-81/BXB0111/GBAA_pXO2_0111</fullName>
    </recommendedName>
</protein>
<gene>
    <name type="ordered locus">pXO2-81</name>
    <name type="ordered locus">BXB0111</name>
    <name type="ordered locus">GBAA_pXO2_0111</name>
</gene>